<accession>Q5ZRP4</accession>
<reference key="1">
    <citation type="journal article" date="2004" name="Science">
        <title>The genomic sequence of the accidental pathogen Legionella pneumophila.</title>
        <authorList>
            <person name="Chien M."/>
            <person name="Morozova I."/>
            <person name="Shi S."/>
            <person name="Sheng H."/>
            <person name="Chen J."/>
            <person name="Gomez S.M."/>
            <person name="Asamani G."/>
            <person name="Hill K."/>
            <person name="Nuara J."/>
            <person name="Feder M."/>
            <person name="Rineer J."/>
            <person name="Greenberg J.J."/>
            <person name="Steshenko V."/>
            <person name="Park S.H."/>
            <person name="Zhao B."/>
            <person name="Teplitskaya E."/>
            <person name="Edwards J.R."/>
            <person name="Pampou S."/>
            <person name="Georghiou A."/>
            <person name="Chou I.-C."/>
            <person name="Iannuccilli W."/>
            <person name="Ulz M.E."/>
            <person name="Kim D.H."/>
            <person name="Geringer-Sameth A."/>
            <person name="Goldsberry C."/>
            <person name="Morozov P."/>
            <person name="Fischer S.G."/>
            <person name="Segal G."/>
            <person name="Qu X."/>
            <person name="Rzhetsky A."/>
            <person name="Zhang P."/>
            <person name="Cayanis E."/>
            <person name="De Jong P.J."/>
            <person name="Ju J."/>
            <person name="Kalachikov S."/>
            <person name="Shuman H.A."/>
            <person name="Russo J.J."/>
        </authorList>
    </citation>
    <scope>NUCLEOTIDE SEQUENCE [LARGE SCALE GENOMIC DNA]</scope>
    <source>
        <strain>Philadelphia 1 / ATCC 33152 / DSM 7513</strain>
    </source>
</reference>
<protein>
    <recommendedName>
        <fullName evidence="1">Glutamine--fructose-6-phosphate aminotransferase [isomerizing]</fullName>
        <ecNumber evidence="1">2.6.1.16</ecNumber>
    </recommendedName>
    <alternativeName>
        <fullName evidence="1">D-fructose-6-phosphate amidotransferase</fullName>
    </alternativeName>
    <alternativeName>
        <fullName evidence="1">GFAT</fullName>
    </alternativeName>
    <alternativeName>
        <fullName evidence="1">Glucosamine-6-phosphate synthase</fullName>
    </alternativeName>
    <alternativeName>
        <fullName evidence="1">Hexosephosphate aminotransferase</fullName>
    </alternativeName>
    <alternativeName>
        <fullName evidence="1">L-glutamine--D-fructose-6-phosphate amidotransferase</fullName>
    </alternativeName>
</protein>
<feature type="initiator methionine" description="Removed" evidence="1">
    <location>
        <position position="1"/>
    </location>
</feature>
<feature type="chain" id="PRO_0000135346" description="Glutamine--fructose-6-phosphate aminotransferase [isomerizing]">
    <location>
        <begin position="2"/>
        <end position="604"/>
    </location>
</feature>
<feature type="domain" description="Glutamine amidotransferase type-2" evidence="1">
    <location>
        <begin position="2"/>
        <end position="219"/>
    </location>
</feature>
<feature type="domain" description="SIS 1" evidence="1">
    <location>
        <begin position="279"/>
        <end position="427"/>
    </location>
</feature>
<feature type="domain" description="SIS 2" evidence="1">
    <location>
        <begin position="454"/>
        <end position="594"/>
    </location>
</feature>
<feature type="active site" description="Nucleophile; for GATase activity" evidence="1">
    <location>
        <position position="2"/>
    </location>
</feature>
<feature type="active site" description="For Fru-6P isomerization activity" evidence="1">
    <location>
        <position position="599"/>
    </location>
</feature>
<organism>
    <name type="scientific">Legionella pneumophila subsp. pneumophila (strain Philadelphia 1 / ATCC 33152 / DSM 7513)</name>
    <dbReference type="NCBI Taxonomy" id="272624"/>
    <lineage>
        <taxon>Bacteria</taxon>
        <taxon>Pseudomonadati</taxon>
        <taxon>Pseudomonadota</taxon>
        <taxon>Gammaproteobacteria</taxon>
        <taxon>Legionellales</taxon>
        <taxon>Legionellaceae</taxon>
        <taxon>Legionella</taxon>
    </lineage>
</organism>
<proteinExistence type="inferred from homology"/>
<gene>
    <name evidence="1" type="primary">glmS</name>
    <name type="ordered locus">lpg2836</name>
</gene>
<comment type="function">
    <text evidence="1">Catalyzes the first step in hexosamine metabolism, converting fructose-6P into glucosamine-6P using glutamine as a nitrogen source.</text>
</comment>
<comment type="catalytic activity">
    <reaction evidence="1">
        <text>D-fructose 6-phosphate + L-glutamine = D-glucosamine 6-phosphate + L-glutamate</text>
        <dbReference type="Rhea" id="RHEA:13237"/>
        <dbReference type="ChEBI" id="CHEBI:29985"/>
        <dbReference type="ChEBI" id="CHEBI:58359"/>
        <dbReference type="ChEBI" id="CHEBI:58725"/>
        <dbReference type="ChEBI" id="CHEBI:61527"/>
        <dbReference type="EC" id="2.6.1.16"/>
    </reaction>
</comment>
<comment type="subunit">
    <text evidence="1">Homodimer.</text>
</comment>
<comment type="subcellular location">
    <subcellularLocation>
        <location evidence="1">Cytoplasm</location>
    </subcellularLocation>
</comment>
<keyword id="KW-0032">Aminotransferase</keyword>
<keyword id="KW-0963">Cytoplasm</keyword>
<keyword id="KW-0315">Glutamine amidotransferase</keyword>
<keyword id="KW-1185">Reference proteome</keyword>
<keyword id="KW-0677">Repeat</keyword>
<keyword id="KW-0808">Transferase</keyword>
<sequence length="604" mass="66360">MCGIMGAVSERDISKILLEGLRRLEYRGYDSAGIAVIDSQDRLKRVRIQGKVQNLADAMQETAIAGNTGIAHTRWATHGKPSEQNAHPHLSHGEIALVHNGIIENHEHLRQQLITYGYQFTSETDTEVAAHLIHYHYQQHENLLLAVQKAAAEMQGAFALGVIHQKRPEELVAIRKGSPLVLGFGIGENFIASDALALRSFAQSVIYMEEGDSACVTTQDIKVYDSNRILVQRAVHPLNSDSEIVNKGPYRHFMLKEIFEQSKVITDTLESRINSIDVLRASFGEKASHIFPVVKNIHIVACGTSYHAGMIAKYWLESLAGLPTQVEIASEYRYRDVVVPDNTLFITVSQSGETADTLAALFKAKQSNYLASLAICNVATSTLVREADCVFLTRAGIEIGVASTKAFTTQLAAFLMLAAALCKDNRAQEVLRQLQELPACCERVLQMNEEVESLASLFVNKVHALFLGRGVQYPVALEGALKLKEISYIHAEAYPAGELKHGPLALVDKDMPVIAVAPNDELLDKLKSNLHEVSARGGQLFVFVDDSQNWKANGARLIKVPSCGAWLAPIVYTIPLQLLAYHVAVAKGTDVDQPRNLAKSVTVE</sequence>
<name>GLMS_LEGPH</name>
<dbReference type="EC" id="2.6.1.16" evidence="1"/>
<dbReference type="EMBL" id="AE017354">
    <property type="protein sequence ID" value="AAU28884.1"/>
    <property type="molecule type" value="Genomic_DNA"/>
</dbReference>
<dbReference type="RefSeq" id="WP_010948523.1">
    <property type="nucleotide sequence ID" value="NC_002942.5"/>
</dbReference>
<dbReference type="RefSeq" id="YP_096831.1">
    <property type="nucleotide sequence ID" value="NC_002942.5"/>
</dbReference>
<dbReference type="SMR" id="Q5ZRP4"/>
<dbReference type="STRING" id="272624.lpg2836"/>
<dbReference type="PaxDb" id="272624-lpg2836"/>
<dbReference type="GeneID" id="57036834"/>
<dbReference type="KEGG" id="lpn:lpg2836"/>
<dbReference type="PATRIC" id="fig|272624.6.peg.3021"/>
<dbReference type="eggNOG" id="COG0449">
    <property type="taxonomic scope" value="Bacteria"/>
</dbReference>
<dbReference type="HOGENOM" id="CLU_012520_5_2_6"/>
<dbReference type="OrthoDB" id="9761808at2"/>
<dbReference type="Proteomes" id="UP000000609">
    <property type="component" value="Chromosome"/>
</dbReference>
<dbReference type="GO" id="GO:0005829">
    <property type="term" value="C:cytosol"/>
    <property type="evidence" value="ECO:0007669"/>
    <property type="project" value="TreeGrafter"/>
</dbReference>
<dbReference type="GO" id="GO:0097367">
    <property type="term" value="F:carbohydrate derivative binding"/>
    <property type="evidence" value="ECO:0007669"/>
    <property type="project" value="InterPro"/>
</dbReference>
<dbReference type="GO" id="GO:0004360">
    <property type="term" value="F:glutamine-fructose-6-phosphate transaminase (isomerizing) activity"/>
    <property type="evidence" value="ECO:0007669"/>
    <property type="project" value="UniProtKB-UniRule"/>
</dbReference>
<dbReference type="GO" id="GO:0005975">
    <property type="term" value="P:carbohydrate metabolic process"/>
    <property type="evidence" value="ECO:0007669"/>
    <property type="project" value="UniProtKB-UniRule"/>
</dbReference>
<dbReference type="GO" id="GO:0006002">
    <property type="term" value="P:fructose 6-phosphate metabolic process"/>
    <property type="evidence" value="ECO:0007669"/>
    <property type="project" value="TreeGrafter"/>
</dbReference>
<dbReference type="GO" id="GO:0006487">
    <property type="term" value="P:protein N-linked glycosylation"/>
    <property type="evidence" value="ECO:0007669"/>
    <property type="project" value="TreeGrafter"/>
</dbReference>
<dbReference type="GO" id="GO:0006047">
    <property type="term" value="P:UDP-N-acetylglucosamine metabolic process"/>
    <property type="evidence" value="ECO:0007669"/>
    <property type="project" value="TreeGrafter"/>
</dbReference>
<dbReference type="CDD" id="cd00714">
    <property type="entry name" value="GFAT"/>
    <property type="match status" value="1"/>
</dbReference>
<dbReference type="CDD" id="cd05008">
    <property type="entry name" value="SIS_GlmS_GlmD_1"/>
    <property type="match status" value="1"/>
</dbReference>
<dbReference type="CDD" id="cd05009">
    <property type="entry name" value="SIS_GlmS_GlmD_2"/>
    <property type="match status" value="1"/>
</dbReference>
<dbReference type="FunFam" id="3.40.50.10490:FF:000001">
    <property type="entry name" value="Glutamine--fructose-6-phosphate aminotransferase [isomerizing]"/>
    <property type="match status" value="1"/>
</dbReference>
<dbReference type="FunFam" id="3.60.20.10:FF:000006">
    <property type="entry name" value="Glutamine--fructose-6-phosphate aminotransferase [isomerizing]"/>
    <property type="match status" value="1"/>
</dbReference>
<dbReference type="Gene3D" id="3.40.50.10490">
    <property type="entry name" value="Glucose-6-phosphate isomerase like protein, domain 1"/>
    <property type="match status" value="2"/>
</dbReference>
<dbReference type="Gene3D" id="3.60.20.10">
    <property type="entry name" value="Glutamine Phosphoribosylpyrophosphate, subunit 1, domain 1"/>
    <property type="match status" value="1"/>
</dbReference>
<dbReference type="HAMAP" id="MF_00164">
    <property type="entry name" value="GlmS"/>
    <property type="match status" value="1"/>
</dbReference>
<dbReference type="InterPro" id="IPR017932">
    <property type="entry name" value="GATase_2_dom"/>
</dbReference>
<dbReference type="InterPro" id="IPR005855">
    <property type="entry name" value="GFAT"/>
</dbReference>
<dbReference type="InterPro" id="IPR047084">
    <property type="entry name" value="GFAT_N"/>
</dbReference>
<dbReference type="InterPro" id="IPR035466">
    <property type="entry name" value="GlmS/AgaS_SIS"/>
</dbReference>
<dbReference type="InterPro" id="IPR035490">
    <property type="entry name" value="GlmS/FrlB_SIS"/>
</dbReference>
<dbReference type="InterPro" id="IPR029055">
    <property type="entry name" value="Ntn_hydrolases_N"/>
</dbReference>
<dbReference type="InterPro" id="IPR001347">
    <property type="entry name" value="SIS_dom"/>
</dbReference>
<dbReference type="InterPro" id="IPR046348">
    <property type="entry name" value="SIS_dom_sf"/>
</dbReference>
<dbReference type="NCBIfam" id="TIGR01135">
    <property type="entry name" value="glmS"/>
    <property type="match status" value="1"/>
</dbReference>
<dbReference type="NCBIfam" id="NF001484">
    <property type="entry name" value="PRK00331.1"/>
    <property type="match status" value="1"/>
</dbReference>
<dbReference type="PANTHER" id="PTHR10937">
    <property type="entry name" value="GLUCOSAMINE--FRUCTOSE-6-PHOSPHATE AMINOTRANSFERASE, ISOMERIZING"/>
    <property type="match status" value="1"/>
</dbReference>
<dbReference type="PANTHER" id="PTHR10937:SF0">
    <property type="entry name" value="GLUTAMINE--FRUCTOSE-6-PHOSPHATE TRANSAMINASE (ISOMERIZING)"/>
    <property type="match status" value="1"/>
</dbReference>
<dbReference type="Pfam" id="PF13522">
    <property type="entry name" value="GATase_6"/>
    <property type="match status" value="1"/>
</dbReference>
<dbReference type="Pfam" id="PF01380">
    <property type="entry name" value="SIS"/>
    <property type="match status" value="2"/>
</dbReference>
<dbReference type="SUPFAM" id="SSF56235">
    <property type="entry name" value="N-terminal nucleophile aminohydrolases (Ntn hydrolases)"/>
    <property type="match status" value="1"/>
</dbReference>
<dbReference type="SUPFAM" id="SSF53697">
    <property type="entry name" value="SIS domain"/>
    <property type="match status" value="1"/>
</dbReference>
<dbReference type="PROSITE" id="PS51278">
    <property type="entry name" value="GATASE_TYPE_2"/>
    <property type="match status" value="1"/>
</dbReference>
<dbReference type="PROSITE" id="PS51464">
    <property type="entry name" value="SIS"/>
    <property type="match status" value="2"/>
</dbReference>
<evidence type="ECO:0000255" key="1">
    <source>
        <dbReference type="HAMAP-Rule" id="MF_00164"/>
    </source>
</evidence>